<name>TPA_MOUSE</name>
<accession>P11214</accession>
<accession>Q6P7U0</accession>
<accession>Q91VP2</accession>
<keyword id="KW-0165">Cleavage on pair of basic residues</keyword>
<keyword id="KW-0903">Direct protein sequencing</keyword>
<keyword id="KW-1015">Disulfide bond</keyword>
<keyword id="KW-0245">EGF-like domain</keyword>
<keyword id="KW-0325">Glycoprotein</keyword>
<keyword id="KW-0378">Hydrolase</keyword>
<keyword id="KW-0420">Kringle</keyword>
<keyword id="KW-0617">Plasminogen activation</keyword>
<keyword id="KW-0645">Protease</keyword>
<keyword id="KW-1185">Reference proteome</keyword>
<keyword id="KW-0677">Repeat</keyword>
<keyword id="KW-0964">Secreted</keyword>
<keyword id="KW-0720">Serine protease</keyword>
<keyword id="KW-0732">Signal</keyword>
<keyword id="KW-0865">Zymogen</keyword>
<evidence type="ECO:0000250" key="1"/>
<evidence type="ECO:0000250" key="2">
    <source>
        <dbReference type="UniProtKB" id="P00750"/>
    </source>
</evidence>
<evidence type="ECO:0000250" key="3">
    <source>
        <dbReference type="UniProtKB" id="P19637"/>
    </source>
</evidence>
<evidence type="ECO:0000255" key="4"/>
<evidence type="ECO:0000255" key="5">
    <source>
        <dbReference type="PROSITE-ProRule" id="PRU00076"/>
    </source>
</evidence>
<evidence type="ECO:0000255" key="6">
    <source>
        <dbReference type="PROSITE-ProRule" id="PRU00121"/>
    </source>
</evidence>
<evidence type="ECO:0000255" key="7">
    <source>
        <dbReference type="PROSITE-ProRule" id="PRU00274"/>
    </source>
</evidence>
<evidence type="ECO:0000255" key="8">
    <source>
        <dbReference type="PROSITE-ProRule" id="PRU00478"/>
    </source>
</evidence>
<evidence type="ECO:0000269" key="9">
    <source>
    </source>
</evidence>
<evidence type="ECO:0000305" key="10"/>
<protein>
    <recommendedName>
        <fullName>Tissue-type plasminogen activator</fullName>
        <shortName>t-PA</shortName>
        <shortName>t-plasminogen activator</shortName>
        <shortName>tPA</shortName>
        <ecNumber>3.4.21.68</ecNumber>
    </recommendedName>
    <component>
        <recommendedName>
            <fullName>Tissue-type plasminogen activator chain A</fullName>
        </recommendedName>
    </component>
    <component>
        <recommendedName>
            <fullName>Tissue-type plasminogen activator chain B</fullName>
        </recommendedName>
    </component>
</protein>
<dbReference type="EC" id="3.4.21.68"/>
<dbReference type="EMBL" id="J03520">
    <property type="protein sequence ID" value="AAA40470.1"/>
    <property type="molecule type" value="mRNA"/>
</dbReference>
<dbReference type="EMBL" id="AK135857">
    <property type="protein sequence ID" value="BAE22698.1"/>
    <property type="molecule type" value="mRNA"/>
</dbReference>
<dbReference type="EMBL" id="AK135965">
    <property type="protein sequence ID" value="BAE22749.1"/>
    <property type="molecule type" value="mRNA"/>
</dbReference>
<dbReference type="EMBL" id="BC011256">
    <property type="protein sequence ID" value="AAH11256.1"/>
    <property type="molecule type" value="mRNA"/>
</dbReference>
<dbReference type="EMBL" id="BC057967">
    <property type="protein sequence ID" value="AAH57967.1"/>
    <property type="molecule type" value="mRNA"/>
</dbReference>
<dbReference type="EMBL" id="BC061508">
    <property type="protein sequence ID" value="AAH61508.1"/>
    <property type="molecule type" value="mRNA"/>
</dbReference>
<dbReference type="CCDS" id="CCDS22183.1"/>
<dbReference type="PIR" id="A29941">
    <property type="entry name" value="A29941"/>
</dbReference>
<dbReference type="RefSeq" id="NP_032898.2">
    <property type="nucleotide sequence ID" value="NM_008872.3"/>
</dbReference>
<dbReference type="RefSeq" id="XP_036009719.1">
    <property type="nucleotide sequence ID" value="XM_036153826.1"/>
</dbReference>
<dbReference type="SMR" id="P11214"/>
<dbReference type="BioGRID" id="202229">
    <property type="interactions" value="4"/>
</dbReference>
<dbReference type="ComplexPortal" id="CPX-518">
    <property type="entry name" value="tPA-PAI-1 complex"/>
</dbReference>
<dbReference type="FunCoup" id="P11214">
    <property type="interactions" value="301"/>
</dbReference>
<dbReference type="IntAct" id="P11214">
    <property type="interactions" value="2"/>
</dbReference>
<dbReference type="MINT" id="P11214"/>
<dbReference type="STRING" id="10090.ENSMUSP00000033941"/>
<dbReference type="BindingDB" id="P11214"/>
<dbReference type="ChEMBL" id="CHEMBL3259492"/>
<dbReference type="MEROPS" id="S01.232"/>
<dbReference type="GlyCosmos" id="P11214">
    <property type="glycosylation" value="2 sites, No reported glycans"/>
</dbReference>
<dbReference type="GlyGen" id="P11214">
    <property type="glycosylation" value="2 sites, 1 N-linked glycan (1 site)"/>
</dbReference>
<dbReference type="iPTMnet" id="P11214"/>
<dbReference type="PhosphoSitePlus" id="P11214"/>
<dbReference type="PaxDb" id="10090-ENSMUSP00000033941"/>
<dbReference type="PeptideAtlas" id="P11214"/>
<dbReference type="ProteomicsDB" id="258819"/>
<dbReference type="Pumba" id="P11214"/>
<dbReference type="ABCD" id="P11214">
    <property type="antibodies" value="5 sequenced antibodies"/>
</dbReference>
<dbReference type="Antibodypedia" id="998">
    <property type="antibodies" value="791 antibodies from 39 providers"/>
</dbReference>
<dbReference type="DNASU" id="18791"/>
<dbReference type="Ensembl" id="ENSMUST00000033941.7">
    <property type="protein sequence ID" value="ENSMUSP00000033941.6"/>
    <property type="gene ID" value="ENSMUSG00000031538.7"/>
</dbReference>
<dbReference type="GeneID" id="18791"/>
<dbReference type="KEGG" id="mmu:18791"/>
<dbReference type="UCSC" id="uc009ldx.2">
    <property type="organism name" value="mouse"/>
</dbReference>
<dbReference type="AGR" id="MGI:97610"/>
<dbReference type="CTD" id="5327"/>
<dbReference type="MGI" id="MGI:97610">
    <property type="gene designation" value="Plat"/>
</dbReference>
<dbReference type="VEuPathDB" id="HostDB:ENSMUSG00000031538"/>
<dbReference type="eggNOG" id="KOG3627">
    <property type="taxonomic scope" value="Eukaryota"/>
</dbReference>
<dbReference type="GeneTree" id="ENSGT00940000158930"/>
<dbReference type="HOGENOM" id="CLU_006842_18_4_1"/>
<dbReference type="InParanoid" id="P11214"/>
<dbReference type="OMA" id="WCYIFKA"/>
<dbReference type="OrthoDB" id="6219at9989"/>
<dbReference type="PhylomeDB" id="P11214"/>
<dbReference type="TreeFam" id="TF329901"/>
<dbReference type="BRENDA" id="3.4.21.68">
    <property type="organism ID" value="3474"/>
</dbReference>
<dbReference type="Reactome" id="R-MMU-186797">
    <property type="pathway name" value="Signaling by PDGF"/>
</dbReference>
<dbReference type="Reactome" id="R-MMU-75205">
    <property type="pathway name" value="Dissolution of Fibrin Clot"/>
</dbReference>
<dbReference type="BioGRID-ORCS" id="18791">
    <property type="hits" value="3 hits in 77 CRISPR screens"/>
</dbReference>
<dbReference type="PRO" id="PR:P11214"/>
<dbReference type="Proteomes" id="UP000000589">
    <property type="component" value="Chromosome 8"/>
</dbReference>
<dbReference type="RNAct" id="P11214">
    <property type="molecule type" value="protein"/>
</dbReference>
<dbReference type="Bgee" id="ENSMUSG00000031538">
    <property type="expression patterns" value="Expressed in primary oocyte and 277 other cell types or tissues"/>
</dbReference>
<dbReference type="GO" id="GO:0045177">
    <property type="term" value="C:apical part of cell"/>
    <property type="evidence" value="ECO:0000314"/>
    <property type="project" value="MGI"/>
</dbReference>
<dbReference type="GO" id="GO:0009986">
    <property type="term" value="C:cell surface"/>
    <property type="evidence" value="ECO:0007669"/>
    <property type="project" value="Ensembl"/>
</dbReference>
<dbReference type="GO" id="GO:0005737">
    <property type="term" value="C:cytoplasm"/>
    <property type="evidence" value="ECO:0000314"/>
    <property type="project" value="MGI"/>
</dbReference>
<dbReference type="GO" id="GO:0005615">
    <property type="term" value="C:extracellular space"/>
    <property type="evidence" value="ECO:0000314"/>
    <property type="project" value="MGI"/>
</dbReference>
<dbReference type="GO" id="GO:0098978">
    <property type="term" value="C:glutamatergic synapse"/>
    <property type="evidence" value="ECO:0000314"/>
    <property type="project" value="SynGO"/>
</dbReference>
<dbReference type="GO" id="GO:0098685">
    <property type="term" value="C:Schaffer collateral - CA1 synapse"/>
    <property type="evidence" value="ECO:0000314"/>
    <property type="project" value="SynGO"/>
</dbReference>
<dbReference type="GO" id="GO:0030141">
    <property type="term" value="C:secretory granule"/>
    <property type="evidence" value="ECO:0000314"/>
    <property type="project" value="MGI"/>
</dbReference>
<dbReference type="GO" id="GO:0097180">
    <property type="term" value="C:serine protease inhibitor complex"/>
    <property type="evidence" value="ECO:0000266"/>
    <property type="project" value="ComplexPortal"/>
</dbReference>
<dbReference type="GO" id="GO:0051219">
    <property type="term" value="F:phosphoprotein binding"/>
    <property type="evidence" value="ECO:0007669"/>
    <property type="project" value="Ensembl"/>
</dbReference>
<dbReference type="GO" id="GO:0004252">
    <property type="term" value="F:serine-type endopeptidase activity"/>
    <property type="evidence" value="ECO:0000314"/>
    <property type="project" value="MGI"/>
</dbReference>
<dbReference type="GO" id="GO:0005102">
    <property type="term" value="F:signaling receptor binding"/>
    <property type="evidence" value="ECO:0007669"/>
    <property type="project" value="Ensembl"/>
</dbReference>
<dbReference type="GO" id="GO:0051918">
    <property type="term" value="P:negative regulation of fibrinolysis"/>
    <property type="evidence" value="ECO:0000303"/>
    <property type="project" value="ComplexPortal"/>
</dbReference>
<dbReference type="GO" id="GO:0010757">
    <property type="term" value="P:negative regulation of plasminogen activation"/>
    <property type="evidence" value="ECO:0000303"/>
    <property type="project" value="ComplexPortal"/>
</dbReference>
<dbReference type="GO" id="GO:0031639">
    <property type="term" value="P:plasminogen activation"/>
    <property type="evidence" value="ECO:0007669"/>
    <property type="project" value="Ensembl"/>
</dbReference>
<dbReference type="GO" id="GO:0048008">
    <property type="term" value="P:platelet-derived growth factor receptor signaling pathway"/>
    <property type="evidence" value="ECO:0000314"/>
    <property type="project" value="MGI"/>
</dbReference>
<dbReference type="GO" id="GO:0060468">
    <property type="term" value="P:prevention of polyspermy"/>
    <property type="evidence" value="ECO:0000250"/>
    <property type="project" value="UniProtKB"/>
</dbReference>
<dbReference type="GO" id="GO:0006508">
    <property type="term" value="P:proteolysis"/>
    <property type="evidence" value="ECO:0000314"/>
    <property type="project" value="MGI"/>
</dbReference>
<dbReference type="GO" id="GO:0001666">
    <property type="term" value="P:response to hypoxia"/>
    <property type="evidence" value="ECO:0000315"/>
    <property type="project" value="MGI"/>
</dbReference>
<dbReference type="GO" id="GO:0014909">
    <property type="term" value="P:smooth muscle cell migration"/>
    <property type="evidence" value="ECO:0000315"/>
    <property type="project" value="MGI"/>
</dbReference>
<dbReference type="GO" id="GO:0099183">
    <property type="term" value="P:trans-synaptic signaling by BDNF, modulating synaptic transmission"/>
    <property type="evidence" value="ECO:0000314"/>
    <property type="project" value="SynGO"/>
</dbReference>
<dbReference type="CDD" id="cd00054">
    <property type="entry name" value="EGF_CA"/>
    <property type="match status" value="1"/>
</dbReference>
<dbReference type="CDD" id="cd00061">
    <property type="entry name" value="FN1"/>
    <property type="match status" value="1"/>
</dbReference>
<dbReference type="CDD" id="cd00108">
    <property type="entry name" value="KR"/>
    <property type="match status" value="2"/>
</dbReference>
<dbReference type="CDD" id="cd00190">
    <property type="entry name" value="Tryp_SPc"/>
    <property type="match status" value="1"/>
</dbReference>
<dbReference type="FunFam" id="2.40.10.10:FF:000054">
    <property type="entry name" value="Complement C1r subcomponent"/>
    <property type="match status" value="1"/>
</dbReference>
<dbReference type="FunFam" id="2.10.70.10:FF:000043">
    <property type="entry name" value="Plasminogen activator"/>
    <property type="match status" value="1"/>
</dbReference>
<dbReference type="FunFam" id="2.10.25.10:FF:000483">
    <property type="entry name" value="Tissue-type plasminogen activator"/>
    <property type="match status" value="1"/>
</dbReference>
<dbReference type="FunFam" id="2.40.10.10:FF:000058">
    <property type="entry name" value="Tissue-type plasminogen activator"/>
    <property type="match status" value="1"/>
</dbReference>
<dbReference type="FunFam" id="2.40.20.10:FF:000001">
    <property type="entry name" value="Urokinase-type plasminogen activator"/>
    <property type="match status" value="2"/>
</dbReference>
<dbReference type="Gene3D" id="2.10.70.10">
    <property type="entry name" value="Complement Module, domain 1"/>
    <property type="match status" value="1"/>
</dbReference>
<dbReference type="Gene3D" id="2.10.25.10">
    <property type="entry name" value="Laminin"/>
    <property type="match status" value="1"/>
</dbReference>
<dbReference type="Gene3D" id="2.40.20.10">
    <property type="entry name" value="Plasminogen Kringle 4"/>
    <property type="match status" value="2"/>
</dbReference>
<dbReference type="Gene3D" id="2.40.10.10">
    <property type="entry name" value="Trypsin-like serine proteases"/>
    <property type="match status" value="2"/>
</dbReference>
<dbReference type="InterPro" id="IPR000742">
    <property type="entry name" value="EGF-like_dom"/>
</dbReference>
<dbReference type="InterPro" id="IPR000083">
    <property type="entry name" value="Fibronectin_type1"/>
</dbReference>
<dbReference type="InterPro" id="IPR000001">
    <property type="entry name" value="Kringle"/>
</dbReference>
<dbReference type="InterPro" id="IPR013806">
    <property type="entry name" value="Kringle-like"/>
</dbReference>
<dbReference type="InterPro" id="IPR018056">
    <property type="entry name" value="Kringle_CS"/>
</dbReference>
<dbReference type="InterPro" id="IPR038178">
    <property type="entry name" value="Kringle_sf"/>
</dbReference>
<dbReference type="InterPro" id="IPR009003">
    <property type="entry name" value="Peptidase_S1_PA"/>
</dbReference>
<dbReference type="InterPro" id="IPR043504">
    <property type="entry name" value="Peptidase_S1_PA_chymotrypsin"/>
</dbReference>
<dbReference type="InterPro" id="IPR001314">
    <property type="entry name" value="Peptidase_S1A"/>
</dbReference>
<dbReference type="InterPro" id="IPR050127">
    <property type="entry name" value="Serine_Proteases_S1"/>
</dbReference>
<dbReference type="InterPro" id="IPR026280">
    <property type="entry name" value="Tissue_plasm_act"/>
</dbReference>
<dbReference type="InterPro" id="IPR001254">
    <property type="entry name" value="Trypsin_dom"/>
</dbReference>
<dbReference type="InterPro" id="IPR018114">
    <property type="entry name" value="TRYPSIN_HIS"/>
</dbReference>
<dbReference type="InterPro" id="IPR033116">
    <property type="entry name" value="TRYPSIN_SER"/>
</dbReference>
<dbReference type="PANTHER" id="PTHR24264:SF42">
    <property type="entry name" value="TISSUE-TYPE PLASMINOGEN ACTIVATOR"/>
    <property type="match status" value="1"/>
</dbReference>
<dbReference type="PANTHER" id="PTHR24264">
    <property type="entry name" value="TRYPSIN-RELATED"/>
    <property type="match status" value="1"/>
</dbReference>
<dbReference type="Pfam" id="PF00008">
    <property type="entry name" value="EGF"/>
    <property type="match status" value="1"/>
</dbReference>
<dbReference type="Pfam" id="PF00039">
    <property type="entry name" value="fn1"/>
    <property type="match status" value="1"/>
</dbReference>
<dbReference type="Pfam" id="PF00051">
    <property type="entry name" value="Kringle"/>
    <property type="match status" value="2"/>
</dbReference>
<dbReference type="Pfam" id="PF00089">
    <property type="entry name" value="Trypsin"/>
    <property type="match status" value="1"/>
</dbReference>
<dbReference type="PIRSF" id="PIRSF001145">
    <property type="entry name" value="Tissue_plasm_act"/>
    <property type="match status" value="1"/>
</dbReference>
<dbReference type="PRINTS" id="PR00722">
    <property type="entry name" value="CHYMOTRYPSIN"/>
</dbReference>
<dbReference type="PRINTS" id="PR00018">
    <property type="entry name" value="KRINGLE"/>
</dbReference>
<dbReference type="SMART" id="SM00181">
    <property type="entry name" value="EGF"/>
    <property type="match status" value="1"/>
</dbReference>
<dbReference type="SMART" id="SM00058">
    <property type="entry name" value="FN1"/>
    <property type="match status" value="1"/>
</dbReference>
<dbReference type="SMART" id="SM00130">
    <property type="entry name" value="KR"/>
    <property type="match status" value="2"/>
</dbReference>
<dbReference type="SMART" id="SM00020">
    <property type="entry name" value="Tryp_SPc"/>
    <property type="match status" value="1"/>
</dbReference>
<dbReference type="SUPFAM" id="SSF57603">
    <property type="entry name" value="FnI-like domain"/>
    <property type="match status" value="1"/>
</dbReference>
<dbReference type="SUPFAM" id="SSF57440">
    <property type="entry name" value="Kringle-like"/>
    <property type="match status" value="2"/>
</dbReference>
<dbReference type="SUPFAM" id="SSF50494">
    <property type="entry name" value="Trypsin-like serine proteases"/>
    <property type="match status" value="1"/>
</dbReference>
<dbReference type="PROSITE" id="PS00022">
    <property type="entry name" value="EGF_1"/>
    <property type="match status" value="1"/>
</dbReference>
<dbReference type="PROSITE" id="PS01186">
    <property type="entry name" value="EGF_2"/>
    <property type="match status" value="1"/>
</dbReference>
<dbReference type="PROSITE" id="PS50026">
    <property type="entry name" value="EGF_3"/>
    <property type="match status" value="1"/>
</dbReference>
<dbReference type="PROSITE" id="PS01253">
    <property type="entry name" value="FN1_1"/>
    <property type="match status" value="1"/>
</dbReference>
<dbReference type="PROSITE" id="PS51091">
    <property type="entry name" value="FN1_2"/>
    <property type="match status" value="1"/>
</dbReference>
<dbReference type="PROSITE" id="PS00021">
    <property type="entry name" value="KRINGLE_1"/>
    <property type="match status" value="2"/>
</dbReference>
<dbReference type="PROSITE" id="PS50070">
    <property type="entry name" value="KRINGLE_2"/>
    <property type="match status" value="2"/>
</dbReference>
<dbReference type="PROSITE" id="PS50240">
    <property type="entry name" value="TRYPSIN_DOM"/>
    <property type="match status" value="1"/>
</dbReference>
<dbReference type="PROSITE" id="PS00134">
    <property type="entry name" value="TRYPSIN_HIS"/>
    <property type="match status" value="1"/>
</dbReference>
<dbReference type="PROSITE" id="PS00135">
    <property type="entry name" value="TRYPSIN_SER"/>
    <property type="match status" value="1"/>
</dbReference>
<comment type="function">
    <text evidence="3">Converts the abundant, but inactive, zymogen plasminogen to plasmin by hydrolyzing a single Arg-Val bond in plasminogen. By controlling plasmin-mediated proteolysis, it plays an important role in tissue remodeling and degradation, in cell migration and many other physiopathological events. During oocyte activation, plays a role in cortical granule reaction in the zona reaction, which contributes to the block to polyspermy (By similarity).</text>
</comment>
<comment type="catalytic activity">
    <reaction>
        <text>Specific cleavage of Arg-|-Val bond in plasminogen to form plasmin.</text>
        <dbReference type="EC" id="3.4.21.68"/>
    </reaction>
</comment>
<comment type="activity regulation">
    <text evidence="2">Inhibited by SERPINA5 (By similarity). Inhibited by SERPINE1 (By similarity).</text>
</comment>
<comment type="subunit">
    <text evidence="1 2">Heterodimer of chain A and chain B held by a disulfide bond. Binds to fibrin with high affinity. This interaction leads to an increase in the catalytic efficiency of the enzyme due to an increase in affinity for plasminogen. Similarly, binding to heparin increases the activation of plasminogen. Binds to annexin A2, cytokeratin-8, fibronectin and laminin. Binds to mannose receptor and the low-density lipoprotein receptor-related protein (LRP1); these proteins are involved in TPA clearance. Binds LRP1B; binding is followed by internalization and degradation. Forms heterodimer with SERPINA5 (By similarity). Interacts with SERPINE1 (By similarity). In complex with SERPINE1, interacts with SORL1 (By similarity).</text>
</comment>
<comment type="subcellular location">
    <subcellularLocation>
        <location>Secreted</location>
        <location>Extracellular space</location>
    </subcellularLocation>
</comment>
<comment type="domain">
    <text evidence="1">Both FN1 and one of the kringle domains are required for binding to fibrin.</text>
</comment>
<comment type="domain">
    <text evidence="1">Both FN1 and EGF-like domains are important for binding to LRP1.</text>
</comment>
<comment type="domain">
    <text evidence="1">The FN1 domain mediates binding to annexin A2.</text>
</comment>
<comment type="domain">
    <text evidence="1">The second kringle domain is implicated in binding to cytokeratin-8 and to the endothelial cell surface binding site.</text>
</comment>
<comment type="PTM">
    <text>The single chain, almost fully active enzyme, can be further processed into a two-chain fully active form by a cleavage after Arg-308 catalyzed by plasmin, tissue kallikrein or factor Xa.</text>
</comment>
<comment type="similarity">
    <text evidence="7">Belongs to the peptidase S1 family.</text>
</comment>
<reference key="1">
    <citation type="journal article" date="1988" name="J. Biol. Chem.">
        <title>Molecular cloning of complementary DNA to mouse tissue plasminogen activator mRNA and its expression during F9 teratocarcinoma cell differentiation.</title>
        <authorList>
            <person name="Rickles R.J."/>
            <person name="Darrow A.L."/>
            <person name="Strickland S."/>
        </authorList>
    </citation>
    <scope>NUCLEOTIDE SEQUENCE [MRNA]</scope>
</reference>
<reference key="2">
    <citation type="journal article" date="2005" name="Science">
        <title>The transcriptional landscape of the mammalian genome.</title>
        <authorList>
            <person name="Carninci P."/>
            <person name="Kasukawa T."/>
            <person name="Katayama S."/>
            <person name="Gough J."/>
            <person name="Frith M.C."/>
            <person name="Maeda N."/>
            <person name="Oyama R."/>
            <person name="Ravasi T."/>
            <person name="Lenhard B."/>
            <person name="Wells C."/>
            <person name="Kodzius R."/>
            <person name="Shimokawa K."/>
            <person name="Bajic V.B."/>
            <person name="Brenner S.E."/>
            <person name="Batalov S."/>
            <person name="Forrest A.R."/>
            <person name="Zavolan M."/>
            <person name="Davis M.J."/>
            <person name="Wilming L.G."/>
            <person name="Aidinis V."/>
            <person name="Allen J.E."/>
            <person name="Ambesi-Impiombato A."/>
            <person name="Apweiler R."/>
            <person name="Aturaliya R.N."/>
            <person name="Bailey T.L."/>
            <person name="Bansal M."/>
            <person name="Baxter L."/>
            <person name="Beisel K.W."/>
            <person name="Bersano T."/>
            <person name="Bono H."/>
            <person name="Chalk A.M."/>
            <person name="Chiu K.P."/>
            <person name="Choudhary V."/>
            <person name="Christoffels A."/>
            <person name="Clutterbuck D.R."/>
            <person name="Crowe M.L."/>
            <person name="Dalla E."/>
            <person name="Dalrymple B.P."/>
            <person name="de Bono B."/>
            <person name="Della Gatta G."/>
            <person name="di Bernardo D."/>
            <person name="Down T."/>
            <person name="Engstrom P."/>
            <person name="Fagiolini M."/>
            <person name="Faulkner G."/>
            <person name="Fletcher C.F."/>
            <person name="Fukushima T."/>
            <person name="Furuno M."/>
            <person name="Futaki S."/>
            <person name="Gariboldi M."/>
            <person name="Georgii-Hemming P."/>
            <person name="Gingeras T.R."/>
            <person name="Gojobori T."/>
            <person name="Green R.E."/>
            <person name="Gustincich S."/>
            <person name="Harbers M."/>
            <person name="Hayashi Y."/>
            <person name="Hensch T.K."/>
            <person name="Hirokawa N."/>
            <person name="Hill D."/>
            <person name="Huminiecki L."/>
            <person name="Iacono M."/>
            <person name="Ikeo K."/>
            <person name="Iwama A."/>
            <person name="Ishikawa T."/>
            <person name="Jakt M."/>
            <person name="Kanapin A."/>
            <person name="Katoh M."/>
            <person name="Kawasawa Y."/>
            <person name="Kelso J."/>
            <person name="Kitamura H."/>
            <person name="Kitano H."/>
            <person name="Kollias G."/>
            <person name="Krishnan S.P."/>
            <person name="Kruger A."/>
            <person name="Kummerfeld S.K."/>
            <person name="Kurochkin I.V."/>
            <person name="Lareau L.F."/>
            <person name="Lazarevic D."/>
            <person name="Lipovich L."/>
            <person name="Liu J."/>
            <person name="Liuni S."/>
            <person name="McWilliam S."/>
            <person name="Madan Babu M."/>
            <person name="Madera M."/>
            <person name="Marchionni L."/>
            <person name="Matsuda H."/>
            <person name="Matsuzawa S."/>
            <person name="Miki H."/>
            <person name="Mignone F."/>
            <person name="Miyake S."/>
            <person name="Morris K."/>
            <person name="Mottagui-Tabar S."/>
            <person name="Mulder N."/>
            <person name="Nakano N."/>
            <person name="Nakauchi H."/>
            <person name="Ng P."/>
            <person name="Nilsson R."/>
            <person name="Nishiguchi S."/>
            <person name="Nishikawa S."/>
            <person name="Nori F."/>
            <person name="Ohara O."/>
            <person name="Okazaki Y."/>
            <person name="Orlando V."/>
            <person name="Pang K.C."/>
            <person name="Pavan W.J."/>
            <person name="Pavesi G."/>
            <person name="Pesole G."/>
            <person name="Petrovsky N."/>
            <person name="Piazza S."/>
            <person name="Reed J."/>
            <person name="Reid J.F."/>
            <person name="Ring B.Z."/>
            <person name="Ringwald M."/>
            <person name="Rost B."/>
            <person name="Ruan Y."/>
            <person name="Salzberg S.L."/>
            <person name="Sandelin A."/>
            <person name="Schneider C."/>
            <person name="Schoenbach C."/>
            <person name="Sekiguchi K."/>
            <person name="Semple C.A."/>
            <person name="Seno S."/>
            <person name="Sessa L."/>
            <person name="Sheng Y."/>
            <person name="Shibata Y."/>
            <person name="Shimada H."/>
            <person name="Shimada K."/>
            <person name="Silva D."/>
            <person name="Sinclair B."/>
            <person name="Sperling S."/>
            <person name="Stupka E."/>
            <person name="Sugiura K."/>
            <person name="Sultana R."/>
            <person name="Takenaka Y."/>
            <person name="Taki K."/>
            <person name="Tammoja K."/>
            <person name="Tan S.L."/>
            <person name="Tang S."/>
            <person name="Taylor M.S."/>
            <person name="Tegner J."/>
            <person name="Teichmann S.A."/>
            <person name="Ueda H.R."/>
            <person name="van Nimwegen E."/>
            <person name="Verardo R."/>
            <person name="Wei C.L."/>
            <person name="Yagi K."/>
            <person name="Yamanishi H."/>
            <person name="Zabarovsky E."/>
            <person name="Zhu S."/>
            <person name="Zimmer A."/>
            <person name="Hide W."/>
            <person name="Bult C."/>
            <person name="Grimmond S.M."/>
            <person name="Teasdale R.D."/>
            <person name="Liu E.T."/>
            <person name="Brusic V."/>
            <person name="Quackenbush J."/>
            <person name="Wahlestedt C."/>
            <person name="Mattick J.S."/>
            <person name="Hume D.A."/>
            <person name="Kai C."/>
            <person name="Sasaki D."/>
            <person name="Tomaru Y."/>
            <person name="Fukuda S."/>
            <person name="Kanamori-Katayama M."/>
            <person name="Suzuki M."/>
            <person name="Aoki J."/>
            <person name="Arakawa T."/>
            <person name="Iida J."/>
            <person name="Imamura K."/>
            <person name="Itoh M."/>
            <person name="Kato T."/>
            <person name="Kawaji H."/>
            <person name="Kawagashira N."/>
            <person name="Kawashima T."/>
            <person name="Kojima M."/>
            <person name="Kondo S."/>
            <person name="Konno H."/>
            <person name="Nakano K."/>
            <person name="Ninomiya N."/>
            <person name="Nishio T."/>
            <person name="Okada M."/>
            <person name="Plessy C."/>
            <person name="Shibata K."/>
            <person name="Shiraki T."/>
            <person name="Suzuki S."/>
            <person name="Tagami M."/>
            <person name="Waki K."/>
            <person name="Watahiki A."/>
            <person name="Okamura-Oho Y."/>
            <person name="Suzuki H."/>
            <person name="Kawai J."/>
            <person name="Hayashizaki Y."/>
        </authorList>
    </citation>
    <scope>NUCLEOTIDE SEQUENCE [LARGE SCALE MRNA]</scope>
    <source>
        <strain>C57BL/6J</strain>
    </source>
</reference>
<reference key="3">
    <citation type="journal article" date="2004" name="Genome Res.">
        <title>The status, quality, and expansion of the NIH full-length cDNA project: the Mammalian Gene Collection (MGC).</title>
        <authorList>
            <consortium name="The MGC Project Team"/>
        </authorList>
    </citation>
    <scope>NUCLEOTIDE SEQUENCE [LARGE SCALE MRNA]</scope>
    <source>
        <strain>FVB/N</strain>
        <strain>NMRI</strain>
        <tissue>Mammary gland</tissue>
        <tissue>Mammary tumor</tissue>
    </source>
</reference>
<reference key="4">
    <citation type="journal article" date="1994" name="Eur. J. Biochem.">
        <title>Characterization of the murine plasma fibrinolytic system.</title>
        <authorList>
            <person name="Lijnen H.R."/>
            <person name="van Hoef B."/>
            <person name="Beelen V."/>
            <person name="Collen D."/>
        </authorList>
    </citation>
    <scope>PROTEIN SEQUENCE OF 33-40 AND 309-316</scope>
</reference>
<proteinExistence type="evidence at protein level"/>
<feature type="signal peptide" evidence="4">
    <location>
        <begin position="1"/>
        <end position="17"/>
    </location>
</feature>
<feature type="propeptide" id="PRO_0000028353" evidence="1">
    <location>
        <begin position="18"/>
        <end position="29"/>
    </location>
</feature>
<feature type="propeptide" id="PRO_0000285906" description="Removed by plasmin" evidence="9">
    <location>
        <begin position="30"/>
        <end position="32"/>
    </location>
</feature>
<feature type="chain" id="PRO_0000028354" description="Tissue-type plasminogen activator">
    <location>
        <begin position="33"/>
        <end position="559"/>
    </location>
</feature>
<feature type="chain" id="PRO_0000028355" description="Tissue-type plasminogen activator chain A">
    <location>
        <begin position="33"/>
        <end position="308"/>
    </location>
</feature>
<feature type="chain" id="PRO_0000028356" description="Tissue-type plasminogen activator chain B">
    <location>
        <begin position="309"/>
        <end position="559"/>
    </location>
</feature>
<feature type="domain" description="Fibronectin type-I" evidence="8">
    <location>
        <begin position="36"/>
        <end position="78"/>
    </location>
</feature>
<feature type="domain" description="EGF-like" evidence="5">
    <location>
        <begin position="79"/>
        <end position="117"/>
    </location>
</feature>
<feature type="domain" description="Kringle 1" evidence="6">
    <location>
        <begin position="124"/>
        <end position="205"/>
    </location>
</feature>
<feature type="domain" description="Kringle 2" evidence="6">
    <location>
        <begin position="213"/>
        <end position="294"/>
    </location>
</feature>
<feature type="domain" description="Peptidase S1" evidence="7">
    <location>
        <begin position="309"/>
        <end position="558"/>
    </location>
</feature>
<feature type="region of interest" description="Important for binding to annexin A2" evidence="1">
    <location>
        <begin position="39"/>
        <end position="49"/>
    </location>
</feature>
<feature type="active site" description="Charge relay system">
    <location>
        <position position="355"/>
    </location>
</feature>
<feature type="active site" description="Charge relay system">
    <location>
        <position position="404"/>
    </location>
</feature>
<feature type="active site" description="Charge relay system">
    <location>
        <position position="510"/>
    </location>
</feature>
<feature type="site" description="Important for binding to LRP1" evidence="1">
    <location>
        <position position="99"/>
    </location>
</feature>
<feature type="site" description="Important for single-chain activity" evidence="1">
    <location>
        <position position="462"/>
    </location>
</feature>
<feature type="site" description="Important for single-chain activity" evidence="1">
    <location>
        <position position="509"/>
    </location>
</feature>
<feature type="glycosylation site" description="N-linked (GlcNAc...) asparagine" evidence="4">
    <location>
        <position position="149"/>
    </location>
</feature>
<feature type="glycosylation site" description="N-linked (GlcNAc...) asparagine" evidence="4">
    <location>
        <position position="481"/>
    </location>
</feature>
<feature type="disulfide bond" evidence="1">
    <location>
        <begin position="38"/>
        <end position="68"/>
    </location>
</feature>
<feature type="disulfide bond" evidence="1">
    <location>
        <begin position="66"/>
        <end position="75"/>
    </location>
</feature>
<feature type="disulfide bond" evidence="1">
    <location>
        <begin position="83"/>
        <end position="94"/>
    </location>
</feature>
<feature type="disulfide bond" evidence="1">
    <location>
        <begin position="88"/>
        <end position="105"/>
    </location>
</feature>
<feature type="disulfide bond" evidence="1">
    <location>
        <begin position="107"/>
        <end position="116"/>
    </location>
</feature>
<feature type="disulfide bond" evidence="1">
    <location>
        <begin position="124"/>
        <end position="205"/>
    </location>
</feature>
<feature type="disulfide bond" evidence="1">
    <location>
        <begin position="145"/>
        <end position="187"/>
    </location>
</feature>
<feature type="disulfide bond" evidence="1">
    <location>
        <begin position="176"/>
        <end position="200"/>
    </location>
</feature>
<feature type="disulfide bond" evidence="1">
    <location>
        <begin position="213"/>
        <end position="294"/>
    </location>
</feature>
<feature type="disulfide bond" evidence="1">
    <location>
        <begin position="234"/>
        <end position="276"/>
    </location>
</feature>
<feature type="disulfide bond" evidence="1">
    <location>
        <begin position="265"/>
        <end position="289"/>
    </location>
</feature>
<feature type="disulfide bond" description="Interchain (between A and B chains)" evidence="5 6 7 8">
    <location>
        <begin position="297"/>
        <end position="428"/>
    </location>
</feature>
<feature type="disulfide bond" evidence="1">
    <location>
        <begin position="340"/>
        <end position="356"/>
    </location>
</feature>
<feature type="disulfide bond" evidence="1">
    <location>
        <begin position="348"/>
        <end position="417"/>
    </location>
</feature>
<feature type="disulfide bond" evidence="1">
    <location>
        <begin position="442"/>
        <end position="516"/>
    </location>
</feature>
<feature type="disulfide bond" evidence="1">
    <location>
        <begin position="474"/>
        <end position="490"/>
    </location>
</feature>
<feature type="disulfide bond" evidence="1">
    <location>
        <begin position="506"/>
        <end position="534"/>
    </location>
</feature>
<feature type="sequence conflict" description="In Ref. 1; AAA40470." evidence="10" ref="1">
    <original>G</original>
    <variation>A</variation>
    <location>
        <position position="260"/>
    </location>
</feature>
<feature type="sequence conflict" description="In Ref. 3; AAH11256." evidence="10" ref="3">
    <original>A</original>
    <variation>P</variation>
    <location>
        <position position="325"/>
    </location>
</feature>
<gene>
    <name type="primary">Plat</name>
</gene>
<organism>
    <name type="scientific">Mus musculus</name>
    <name type="common">Mouse</name>
    <dbReference type="NCBI Taxonomy" id="10090"/>
    <lineage>
        <taxon>Eukaryota</taxon>
        <taxon>Metazoa</taxon>
        <taxon>Chordata</taxon>
        <taxon>Craniata</taxon>
        <taxon>Vertebrata</taxon>
        <taxon>Euteleostomi</taxon>
        <taxon>Mammalia</taxon>
        <taxon>Eutheria</taxon>
        <taxon>Euarchontoglires</taxon>
        <taxon>Glires</taxon>
        <taxon>Rodentia</taxon>
        <taxon>Myomorpha</taxon>
        <taxon>Muroidea</taxon>
        <taxon>Muridae</taxon>
        <taxon>Murinae</taxon>
        <taxon>Mus</taxon>
        <taxon>Mus</taxon>
    </lineage>
</organism>
<sequence>MKRELLCVLLLCGLAFPLPDQGIHGRFRRGARSYRATCRDEPTQTTYQQHQSWLRPMLRSSRVEYCRCNSGLVQCHSVPVRSCSEPRCFNGGTCQQALYFSDFVCQCPDGFVGKRCDIDTRATCFEEQGITYRGTWSTAESGAECINWNSSVLSLKPYNARRPNAIKLGLGNHNYCRNPDRDLKPWCYVFKAGKYTTEFCSTPACPKGKSEDCYVGKGVTYRGTHSLTTSQASCLPWNSIVLMGKSYTAWRTNSQALGLGRHNYCRNPDGDARPWCHVMKDRKLTWEYCDMSPCSTCGLRQYKRPQFRIKGGLYTDITSHPWQAAIFVKNKRSPGERFLCGGVLISSCWVLSAAHCFLERFPPNHLKVVLGRTYRVVPGEEEQTFEIEKYIVHEEFDDDTYDNDIALLQLRSQSKQCAQESSSVGTACLPDPNLQLPDWTECELSGYGKHEASSPFFSDRLKEAHVRLYPSSRCTSQHLFNKTVTNNMLCAGDTRSGGNQDLHDACQGDSGGPLVCMINKQMTLTGIISWGLGCGQKDVPGVYTKVTNYLDWIHDNMKQ</sequence>